<gene>
    <name evidence="1" type="primary">hutI</name>
    <name type="ordered locus">BURPS1106A_2719</name>
</gene>
<protein>
    <recommendedName>
        <fullName evidence="1">Imidazolonepropionase</fullName>
        <ecNumber evidence="1">3.5.2.7</ecNumber>
    </recommendedName>
    <alternativeName>
        <fullName evidence="1">Imidazolone-5-propionate hydrolase</fullName>
    </alternativeName>
</protein>
<proteinExistence type="inferred from homology"/>
<keyword id="KW-0963">Cytoplasm</keyword>
<keyword id="KW-0369">Histidine metabolism</keyword>
<keyword id="KW-0378">Hydrolase</keyword>
<keyword id="KW-0408">Iron</keyword>
<keyword id="KW-0479">Metal-binding</keyword>
<keyword id="KW-0862">Zinc</keyword>
<reference key="1">
    <citation type="journal article" date="2010" name="Genome Biol. Evol.">
        <title>Continuing evolution of Burkholderia mallei through genome reduction and large-scale rearrangements.</title>
        <authorList>
            <person name="Losada L."/>
            <person name="Ronning C.M."/>
            <person name="DeShazer D."/>
            <person name="Woods D."/>
            <person name="Fedorova N."/>
            <person name="Kim H.S."/>
            <person name="Shabalina S.A."/>
            <person name="Pearson T.R."/>
            <person name="Brinkac L."/>
            <person name="Tan P."/>
            <person name="Nandi T."/>
            <person name="Crabtree J."/>
            <person name="Badger J."/>
            <person name="Beckstrom-Sternberg S."/>
            <person name="Saqib M."/>
            <person name="Schutzer S.E."/>
            <person name="Keim P."/>
            <person name="Nierman W.C."/>
        </authorList>
    </citation>
    <scope>NUCLEOTIDE SEQUENCE [LARGE SCALE GENOMIC DNA]</scope>
    <source>
        <strain>1106a</strain>
    </source>
</reference>
<comment type="function">
    <text evidence="1">Catalyzes the hydrolytic cleavage of the carbon-nitrogen bond in imidazolone-5-propanoate to yield N-formimidoyl-L-glutamate. It is the third step in the universal histidine degradation pathway.</text>
</comment>
<comment type="catalytic activity">
    <reaction evidence="1">
        <text>4-imidazolone-5-propanoate + H2O = N-formimidoyl-L-glutamate</text>
        <dbReference type="Rhea" id="RHEA:23660"/>
        <dbReference type="ChEBI" id="CHEBI:15377"/>
        <dbReference type="ChEBI" id="CHEBI:58928"/>
        <dbReference type="ChEBI" id="CHEBI:77893"/>
        <dbReference type="EC" id="3.5.2.7"/>
    </reaction>
</comment>
<comment type="cofactor">
    <cofactor evidence="1">
        <name>Zn(2+)</name>
        <dbReference type="ChEBI" id="CHEBI:29105"/>
    </cofactor>
    <cofactor evidence="1">
        <name>Fe(3+)</name>
        <dbReference type="ChEBI" id="CHEBI:29034"/>
    </cofactor>
    <text evidence="1">Binds 1 zinc or iron ion per subunit.</text>
</comment>
<comment type="pathway">
    <text evidence="1">Amino-acid degradation; L-histidine degradation into L-glutamate; N-formimidoyl-L-glutamate from L-histidine: step 3/3.</text>
</comment>
<comment type="subcellular location">
    <subcellularLocation>
        <location evidence="1">Cytoplasm</location>
    </subcellularLocation>
</comment>
<comment type="similarity">
    <text evidence="1">Belongs to the metallo-dependent hydrolases superfamily. HutI family.</text>
</comment>
<organism>
    <name type="scientific">Burkholderia pseudomallei (strain 1106a)</name>
    <dbReference type="NCBI Taxonomy" id="357348"/>
    <lineage>
        <taxon>Bacteria</taxon>
        <taxon>Pseudomonadati</taxon>
        <taxon>Pseudomonadota</taxon>
        <taxon>Betaproteobacteria</taxon>
        <taxon>Burkholderiales</taxon>
        <taxon>Burkholderiaceae</taxon>
        <taxon>Burkholderia</taxon>
        <taxon>pseudomallei group</taxon>
    </lineage>
</organism>
<dbReference type="EC" id="3.5.2.7" evidence="1"/>
<dbReference type="EMBL" id="CP000572">
    <property type="protein sequence ID" value="ABN89106.1"/>
    <property type="molecule type" value="Genomic_DNA"/>
</dbReference>
<dbReference type="RefSeq" id="WP_004191108.1">
    <property type="nucleotide sequence ID" value="NC_009076.1"/>
</dbReference>
<dbReference type="SMR" id="A3NX99"/>
<dbReference type="GeneID" id="92978414"/>
<dbReference type="KEGG" id="bpl:BURPS1106A_2719"/>
<dbReference type="HOGENOM" id="CLU_041647_0_0_4"/>
<dbReference type="UniPathway" id="UPA00379">
    <property type="reaction ID" value="UER00551"/>
</dbReference>
<dbReference type="Proteomes" id="UP000006738">
    <property type="component" value="Chromosome I"/>
</dbReference>
<dbReference type="GO" id="GO:0005737">
    <property type="term" value="C:cytoplasm"/>
    <property type="evidence" value="ECO:0007669"/>
    <property type="project" value="UniProtKB-SubCell"/>
</dbReference>
<dbReference type="GO" id="GO:0050480">
    <property type="term" value="F:imidazolonepropionase activity"/>
    <property type="evidence" value="ECO:0007669"/>
    <property type="project" value="UniProtKB-UniRule"/>
</dbReference>
<dbReference type="GO" id="GO:0005506">
    <property type="term" value="F:iron ion binding"/>
    <property type="evidence" value="ECO:0007669"/>
    <property type="project" value="UniProtKB-UniRule"/>
</dbReference>
<dbReference type="GO" id="GO:0008270">
    <property type="term" value="F:zinc ion binding"/>
    <property type="evidence" value="ECO:0007669"/>
    <property type="project" value="UniProtKB-UniRule"/>
</dbReference>
<dbReference type="GO" id="GO:0019556">
    <property type="term" value="P:L-histidine catabolic process to glutamate and formamide"/>
    <property type="evidence" value="ECO:0007669"/>
    <property type="project" value="UniProtKB-UniPathway"/>
</dbReference>
<dbReference type="GO" id="GO:0019557">
    <property type="term" value="P:L-histidine catabolic process to glutamate and formate"/>
    <property type="evidence" value="ECO:0007669"/>
    <property type="project" value="UniProtKB-UniPathway"/>
</dbReference>
<dbReference type="CDD" id="cd01296">
    <property type="entry name" value="Imidazolone-5PH"/>
    <property type="match status" value="1"/>
</dbReference>
<dbReference type="FunFam" id="3.20.20.140:FF:000007">
    <property type="entry name" value="Imidazolonepropionase"/>
    <property type="match status" value="1"/>
</dbReference>
<dbReference type="Gene3D" id="3.20.20.140">
    <property type="entry name" value="Metal-dependent hydrolases"/>
    <property type="match status" value="1"/>
</dbReference>
<dbReference type="Gene3D" id="2.30.40.10">
    <property type="entry name" value="Urease, subunit C, domain 1"/>
    <property type="match status" value="1"/>
</dbReference>
<dbReference type="HAMAP" id="MF_00372">
    <property type="entry name" value="HutI"/>
    <property type="match status" value="1"/>
</dbReference>
<dbReference type="InterPro" id="IPR006680">
    <property type="entry name" value="Amidohydro-rel"/>
</dbReference>
<dbReference type="InterPro" id="IPR005920">
    <property type="entry name" value="HutI"/>
</dbReference>
<dbReference type="InterPro" id="IPR011059">
    <property type="entry name" value="Metal-dep_hydrolase_composite"/>
</dbReference>
<dbReference type="InterPro" id="IPR032466">
    <property type="entry name" value="Metal_Hydrolase"/>
</dbReference>
<dbReference type="NCBIfam" id="TIGR01224">
    <property type="entry name" value="hutI"/>
    <property type="match status" value="1"/>
</dbReference>
<dbReference type="PANTHER" id="PTHR42752">
    <property type="entry name" value="IMIDAZOLONEPROPIONASE"/>
    <property type="match status" value="1"/>
</dbReference>
<dbReference type="PANTHER" id="PTHR42752:SF1">
    <property type="entry name" value="IMIDAZOLONEPROPIONASE-RELATED"/>
    <property type="match status" value="1"/>
</dbReference>
<dbReference type="Pfam" id="PF01979">
    <property type="entry name" value="Amidohydro_1"/>
    <property type="match status" value="1"/>
</dbReference>
<dbReference type="SUPFAM" id="SSF51338">
    <property type="entry name" value="Composite domain of metallo-dependent hydrolases"/>
    <property type="match status" value="1"/>
</dbReference>
<dbReference type="SUPFAM" id="SSF51556">
    <property type="entry name" value="Metallo-dependent hydrolases"/>
    <property type="match status" value="1"/>
</dbReference>
<name>HUTI_BURP0</name>
<evidence type="ECO:0000255" key="1">
    <source>
        <dbReference type="HAMAP-Rule" id="MF_00372"/>
    </source>
</evidence>
<accession>A3NX99</accession>
<feature type="chain" id="PRO_0000306451" description="Imidazolonepropionase">
    <location>
        <begin position="1"/>
        <end position="407"/>
    </location>
</feature>
<feature type="binding site" evidence="1">
    <location>
        <position position="68"/>
    </location>
    <ligand>
        <name>Fe(3+)</name>
        <dbReference type="ChEBI" id="CHEBI:29034"/>
    </ligand>
</feature>
<feature type="binding site" evidence="1">
    <location>
        <position position="68"/>
    </location>
    <ligand>
        <name>Zn(2+)</name>
        <dbReference type="ChEBI" id="CHEBI:29105"/>
    </ligand>
</feature>
<feature type="binding site" evidence="1">
    <location>
        <position position="70"/>
    </location>
    <ligand>
        <name>Fe(3+)</name>
        <dbReference type="ChEBI" id="CHEBI:29034"/>
    </ligand>
</feature>
<feature type="binding site" evidence="1">
    <location>
        <position position="70"/>
    </location>
    <ligand>
        <name>Zn(2+)</name>
        <dbReference type="ChEBI" id="CHEBI:29105"/>
    </ligand>
</feature>
<feature type="binding site" evidence="1">
    <location>
        <position position="77"/>
    </location>
    <ligand>
        <name>4-imidazolone-5-propanoate</name>
        <dbReference type="ChEBI" id="CHEBI:77893"/>
    </ligand>
</feature>
<feature type="binding site" evidence="1">
    <location>
        <position position="140"/>
    </location>
    <ligand>
        <name>4-imidazolone-5-propanoate</name>
        <dbReference type="ChEBI" id="CHEBI:77893"/>
    </ligand>
</feature>
<feature type="binding site" evidence="1">
    <location>
        <position position="140"/>
    </location>
    <ligand>
        <name>N-formimidoyl-L-glutamate</name>
        <dbReference type="ChEBI" id="CHEBI:58928"/>
    </ligand>
</feature>
<feature type="binding site" evidence="1">
    <location>
        <position position="173"/>
    </location>
    <ligand>
        <name>4-imidazolone-5-propanoate</name>
        <dbReference type="ChEBI" id="CHEBI:77893"/>
    </ligand>
</feature>
<feature type="binding site" evidence="1">
    <location>
        <position position="238"/>
    </location>
    <ligand>
        <name>Fe(3+)</name>
        <dbReference type="ChEBI" id="CHEBI:29034"/>
    </ligand>
</feature>
<feature type="binding site" evidence="1">
    <location>
        <position position="238"/>
    </location>
    <ligand>
        <name>Zn(2+)</name>
        <dbReference type="ChEBI" id="CHEBI:29105"/>
    </ligand>
</feature>
<feature type="binding site" evidence="1">
    <location>
        <position position="241"/>
    </location>
    <ligand>
        <name>4-imidazolone-5-propanoate</name>
        <dbReference type="ChEBI" id="CHEBI:77893"/>
    </ligand>
</feature>
<feature type="binding site" evidence="1">
    <location>
        <position position="313"/>
    </location>
    <ligand>
        <name>Fe(3+)</name>
        <dbReference type="ChEBI" id="CHEBI:29034"/>
    </ligand>
</feature>
<feature type="binding site" evidence="1">
    <location>
        <position position="313"/>
    </location>
    <ligand>
        <name>Zn(2+)</name>
        <dbReference type="ChEBI" id="CHEBI:29105"/>
    </ligand>
</feature>
<feature type="binding site" evidence="1">
    <location>
        <position position="315"/>
    </location>
    <ligand>
        <name>N-formimidoyl-L-glutamate</name>
        <dbReference type="ChEBI" id="CHEBI:58928"/>
    </ligand>
</feature>
<feature type="binding site" evidence="1">
    <location>
        <position position="317"/>
    </location>
    <ligand>
        <name>N-formimidoyl-L-glutamate</name>
        <dbReference type="ChEBI" id="CHEBI:58928"/>
    </ligand>
</feature>
<feature type="binding site" evidence="1">
    <location>
        <position position="318"/>
    </location>
    <ligand>
        <name>4-imidazolone-5-propanoate</name>
        <dbReference type="ChEBI" id="CHEBI:77893"/>
    </ligand>
</feature>
<sequence>MKSILWHNLKLCAHGDPNDTIADAAIAVNGDGTIAWTGRASDVPAGYVHWPREDLRGAWVTPGLVDCHTHLVYGGQRADEFAQRLAGASYEEIAQRGGGIVSTVRATRDASEAALFEQACARLRPLLAEGVTAIEIKSGYGLELASERRMLRVARQLGERFPVSVYTTFLGAHALPPEYAGRADEYIDEVCERMLPALADEGLVDAVDVFCERIGFTLAQSERVFEAAARRGLPVKMHAEQLSNGGGSALAARYRALSADHLEYLDAAGVAAMRASGTTAVLLPGAYYFIRETKLPPIDLLRRHGVPIALATDHNPGTSPLTSLLLTMNMGCTVFKLTVQEALLGVTRHAAAALGASDRHGSLAPGRQADFAVWSVSTLAELAYWFGRPLCERVVKGGVTVFTRDAR</sequence>